<comment type="function">
    <text evidence="3 4">Fluoride channel required for the rapid expulsion of cytoplasmic fluoride.</text>
</comment>
<comment type="catalytic activity">
    <reaction evidence="4 7">
        <text>fluoride(in) = fluoride(out)</text>
        <dbReference type="Rhea" id="RHEA:76159"/>
        <dbReference type="ChEBI" id="CHEBI:17051"/>
    </reaction>
    <physiologicalReaction direction="left-to-right" evidence="4 7">
        <dbReference type="Rhea" id="RHEA:76160"/>
    </physiologicalReaction>
</comment>
<comment type="subcellular location">
    <subcellularLocation>
        <location evidence="4">Cell membrane</location>
        <topology evidence="4">Multi-pass membrane protein</topology>
    </subcellularLocation>
</comment>
<comment type="disruption phenotype">
    <text evidence="3">Highly sensible to fluoride, but not to other halide salts. The growth of a double deletion of both FEX1 and FEX2 is inhibited at almost a 1000-fold lower fluoride concentration than in the wild-type. Has increased intracellular fluoride concentrations.</text>
</comment>
<comment type="miscellaneous">
    <text evidence="4">Present with 220 molecules/cell in the plasma membrane.</text>
</comment>
<comment type="similarity">
    <text evidence="6">Belongs to the fluoride channel Fluc/FEX (TC 1.A.43) family.</text>
</comment>
<sequence length="375" mass="41985">MIFNPVISNHKLSHYIHVFCTFTTFCILGTETRQAITALSTYTPAFVTAPTVLWSNCSSCMLMGIMQSLNAYTWMKDHQVLFLGVTTGYCGALSSFSSMLLEMFEHSTNLTNGNIANHTKLPNRAYGIMEFLSVLLVHLMVSMGSLIFGRQLGKEVIVAYGSSSFSKPYTPPSDTVKENAGDVDTQEMEKNILEFKFKTPAPFFKKFFDIVDKLAYALAFPLIILFVVLCAYYENYSRGKWTLPCLFGIFAGFLRYWLAEMFNKTNKKFPLGTFLANVFATLLIGIFTMVQRGKKHFSTDVPIVNSLNSCHIVSALISGFCGTLSTISTFINEGYKLSFINMLIYYTVSIAISYCLLVITLGSYAWTRGLTNPIC</sequence>
<accession>Q08913</accession>
<accession>D6W383</accession>
<keyword id="KW-1003">Cell membrane</keyword>
<keyword id="KW-0325">Glycoprotein</keyword>
<keyword id="KW-0472">Membrane</keyword>
<keyword id="KW-1185">Reference proteome</keyword>
<keyword id="KW-0812">Transmembrane</keyword>
<keyword id="KW-1133">Transmembrane helix</keyword>
<evidence type="ECO:0000255" key="1"/>
<evidence type="ECO:0000255" key="2">
    <source>
        <dbReference type="PROSITE-ProRule" id="PRU00498"/>
    </source>
</evidence>
<evidence type="ECO:0000269" key="3">
    <source>
    </source>
</evidence>
<evidence type="ECO:0000269" key="4">
    <source>
    </source>
</evidence>
<evidence type="ECO:0000303" key="5">
    <source>
    </source>
</evidence>
<evidence type="ECO:0000305" key="6"/>
<evidence type="ECO:0000305" key="7">
    <source>
    </source>
</evidence>
<evidence type="ECO:0000305" key="8">
    <source>
    </source>
</evidence>
<evidence type="ECO:0000312" key="9">
    <source>
        <dbReference type="SGD" id="S000005917"/>
    </source>
</evidence>
<reference key="1">
    <citation type="journal article" date="1997" name="Nature">
        <title>The nucleotide sequence of Saccharomyces cerevisiae chromosome XV.</title>
        <authorList>
            <person name="Dujon B."/>
            <person name="Albermann K."/>
            <person name="Aldea M."/>
            <person name="Alexandraki D."/>
            <person name="Ansorge W."/>
            <person name="Arino J."/>
            <person name="Benes V."/>
            <person name="Bohn C."/>
            <person name="Bolotin-Fukuhara M."/>
            <person name="Bordonne R."/>
            <person name="Boyer J."/>
            <person name="Camasses A."/>
            <person name="Casamayor A."/>
            <person name="Casas C."/>
            <person name="Cheret G."/>
            <person name="Cziepluch C."/>
            <person name="Daignan-Fornier B."/>
            <person name="Dang V.-D."/>
            <person name="de Haan M."/>
            <person name="Delius H."/>
            <person name="Durand P."/>
            <person name="Fairhead C."/>
            <person name="Feldmann H."/>
            <person name="Gaillon L."/>
            <person name="Galisson F."/>
            <person name="Gamo F.-J."/>
            <person name="Gancedo C."/>
            <person name="Goffeau A."/>
            <person name="Goulding S.E."/>
            <person name="Grivell L.A."/>
            <person name="Habbig B."/>
            <person name="Hand N.J."/>
            <person name="Hani J."/>
            <person name="Hattenhorst U."/>
            <person name="Hebling U."/>
            <person name="Hernando Y."/>
            <person name="Herrero E."/>
            <person name="Heumann K."/>
            <person name="Hiesel R."/>
            <person name="Hilger F."/>
            <person name="Hofmann B."/>
            <person name="Hollenberg C.P."/>
            <person name="Hughes B."/>
            <person name="Jauniaux J.-C."/>
            <person name="Kalogeropoulos A."/>
            <person name="Katsoulou C."/>
            <person name="Kordes E."/>
            <person name="Lafuente M.J."/>
            <person name="Landt O."/>
            <person name="Louis E.J."/>
            <person name="Maarse A.C."/>
            <person name="Madania A."/>
            <person name="Mannhaupt G."/>
            <person name="Marck C."/>
            <person name="Martin R.P."/>
            <person name="Mewes H.-W."/>
            <person name="Michaux G."/>
            <person name="Paces V."/>
            <person name="Parle-McDermott A.G."/>
            <person name="Pearson B.M."/>
            <person name="Perrin A."/>
            <person name="Pettersson B."/>
            <person name="Poch O."/>
            <person name="Pohl T.M."/>
            <person name="Poirey R."/>
            <person name="Portetelle D."/>
            <person name="Pujol A."/>
            <person name="Purnelle B."/>
            <person name="Ramezani Rad M."/>
            <person name="Rechmann S."/>
            <person name="Schwager C."/>
            <person name="Schweizer M."/>
            <person name="Sor F."/>
            <person name="Sterky F."/>
            <person name="Tarassov I.A."/>
            <person name="Teodoru C."/>
            <person name="Tettelin H."/>
            <person name="Thierry A."/>
            <person name="Tobiasch E."/>
            <person name="Tzermia M."/>
            <person name="Uhlen M."/>
            <person name="Unseld M."/>
            <person name="Valens M."/>
            <person name="Vandenbol M."/>
            <person name="Vetter I."/>
            <person name="Vlcek C."/>
            <person name="Voet M."/>
            <person name="Volckaert G."/>
            <person name="Voss H."/>
            <person name="Wambutt R."/>
            <person name="Wedler H."/>
            <person name="Wiemann S."/>
            <person name="Winsor B."/>
            <person name="Wolfe K.H."/>
            <person name="Zollner A."/>
            <person name="Zumstein E."/>
            <person name="Kleine K."/>
        </authorList>
    </citation>
    <scope>NUCLEOTIDE SEQUENCE [LARGE SCALE GENOMIC DNA]</scope>
    <source>
        <strain>ATCC 204508 / S288c</strain>
    </source>
</reference>
<reference key="2">
    <citation type="journal article" date="2014" name="G3 (Bethesda)">
        <title>The reference genome sequence of Saccharomyces cerevisiae: Then and now.</title>
        <authorList>
            <person name="Engel S.R."/>
            <person name="Dietrich F.S."/>
            <person name="Fisk D.G."/>
            <person name="Binkley G."/>
            <person name="Balakrishnan R."/>
            <person name="Costanzo M.C."/>
            <person name="Dwight S.S."/>
            <person name="Hitz B.C."/>
            <person name="Karra K."/>
            <person name="Nash R.S."/>
            <person name="Weng S."/>
            <person name="Wong E.D."/>
            <person name="Lloyd P."/>
            <person name="Skrzypek M.S."/>
            <person name="Miyasato S.R."/>
            <person name="Simison M."/>
            <person name="Cherry J.M."/>
        </authorList>
    </citation>
    <scope>GENOME REANNOTATION</scope>
    <source>
        <strain>ATCC 204508 / S288c</strain>
    </source>
</reference>
<reference key="3">
    <citation type="journal article" date="2013" name="Proc. Natl. Acad. Sci. U.S.A.">
        <title>Eukaryotic resistance to fluoride toxicity mediated by a widespread family of fluoride export proteins.</title>
        <authorList>
            <person name="Li S."/>
            <person name="Smith K.D."/>
            <person name="Davis J.H."/>
            <person name="Gordon P.B."/>
            <person name="Breaker R.R."/>
            <person name="Strobel S.A."/>
        </authorList>
    </citation>
    <scope>FUNCTION</scope>
    <scope>DISRUPTION PHENOTYPE</scope>
</reference>
<reference key="4">
    <citation type="journal article" date="2015" name="J. Biol. Chem.">
        <title>Yeast Fex1p is a constitutively expressed fluoride channel with functional asymmetry of its two homologous domains.</title>
        <authorList>
            <person name="Smith K.D."/>
            <person name="Gordon P.B."/>
            <person name="Rivetta A."/>
            <person name="Allen K.E."/>
            <person name="Berbasova T."/>
            <person name="Slayman C."/>
            <person name="Strobel S.A."/>
        </authorList>
    </citation>
    <scope>FUNCTION</scope>
    <scope>TRANSPORTER ACTIVITY</scope>
    <scope>SUBCELLULAR LOCATION</scope>
    <scope>TOPOLOGY</scope>
    <scope>LEVEL OF PROTEIN EXPRESSION</scope>
</reference>
<organism>
    <name type="scientific">Saccharomyces cerevisiae (strain ATCC 204508 / S288c)</name>
    <name type="common">Baker's yeast</name>
    <dbReference type="NCBI Taxonomy" id="559292"/>
    <lineage>
        <taxon>Eukaryota</taxon>
        <taxon>Fungi</taxon>
        <taxon>Dikarya</taxon>
        <taxon>Ascomycota</taxon>
        <taxon>Saccharomycotina</taxon>
        <taxon>Saccharomycetes</taxon>
        <taxon>Saccharomycetales</taxon>
        <taxon>Saccharomycetaceae</taxon>
        <taxon>Saccharomyces</taxon>
    </lineage>
</organism>
<feature type="chain" id="PRO_0000241699" description="Fluoride export protein 1">
    <location>
        <begin position="1"/>
        <end position="375"/>
    </location>
</feature>
<feature type="topological domain" description="Cytoplasmic" evidence="4">
    <location>
        <begin position="1"/>
        <end position="11"/>
    </location>
</feature>
<feature type="transmembrane region" description="Helical" evidence="1">
    <location>
        <begin position="12"/>
        <end position="32"/>
    </location>
</feature>
<feature type="topological domain" description="Extracellular" evidence="8">
    <location>
        <begin position="33"/>
        <end position="34"/>
    </location>
</feature>
<feature type="transmembrane region" description="Helical" evidence="1">
    <location>
        <begin position="35"/>
        <end position="55"/>
    </location>
</feature>
<feature type="topological domain" description="Cytoplasmic" evidence="8">
    <location>
        <begin position="56"/>
        <end position="79"/>
    </location>
</feature>
<feature type="transmembrane region" description="Helical" evidence="1">
    <location>
        <begin position="80"/>
        <end position="100"/>
    </location>
</feature>
<feature type="topological domain" description="Extracellular" evidence="4">
    <location>
        <begin position="101"/>
        <end position="127"/>
    </location>
</feature>
<feature type="transmembrane region" description="Helical" evidence="1">
    <location>
        <begin position="128"/>
        <end position="148"/>
    </location>
</feature>
<feature type="topological domain" description="Cytoplasmic" evidence="4">
    <location>
        <begin position="149"/>
        <end position="213"/>
    </location>
</feature>
<feature type="transmembrane region" description="Helical" evidence="1">
    <location>
        <begin position="214"/>
        <end position="234"/>
    </location>
</feature>
<feature type="topological domain" description="Extracellular" evidence="4">
    <location>
        <begin position="235"/>
        <end position="241"/>
    </location>
</feature>
<feature type="transmembrane region" description="Helical" evidence="1">
    <location>
        <begin position="242"/>
        <end position="262"/>
    </location>
</feature>
<feature type="topological domain" description="Cytoplasmic" evidence="8">
    <location>
        <begin position="263"/>
        <end position="268"/>
    </location>
</feature>
<feature type="transmembrane region" description="Helical" evidence="1">
    <location>
        <begin position="269"/>
        <end position="289"/>
    </location>
</feature>
<feature type="topological domain" description="Extracellular" evidence="4">
    <location>
        <begin position="290"/>
        <end position="310"/>
    </location>
</feature>
<feature type="transmembrane region" description="Helical" evidence="1">
    <location>
        <begin position="311"/>
        <end position="331"/>
    </location>
</feature>
<feature type="topological domain" description="Cytoplasmic" evidence="8">
    <location>
        <begin position="332"/>
        <end position="338"/>
    </location>
</feature>
<feature type="transmembrane region" description="Helical" evidence="1">
    <location>
        <begin position="339"/>
        <end position="359"/>
    </location>
</feature>
<feature type="topological domain" description="Extracellular" evidence="8">
    <location>
        <begin position="360"/>
        <end position="375"/>
    </location>
</feature>
<feature type="glycosylation site" description="N-linked (GlcNAc...) asparagine" evidence="2">
    <location>
        <position position="109"/>
    </location>
</feature>
<feature type="glycosylation site" description="N-linked (GlcNAc...) asparagine" evidence="2">
    <location>
        <position position="117"/>
    </location>
</feature>
<feature type="glycosylation site" description="N-linked (GlcNAc...) asparagine" evidence="2">
    <location>
        <position position="235"/>
    </location>
</feature>
<gene>
    <name evidence="5" type="primary">FEX1</name>
    <name evidence="9" type="ordered locus">YOR390W</name>
</gene>
<protein>
    <recommendedName>
        <fullName evidence="5">Fluoride export protein 1</fullName>
    </recommendedName>
</protein>
<name>FEX1_YEAST</name>
<dbReference type="EMBL" id="Z75298">
    <property type="protein sequence ID" value="CAA99722.1"/>
    <property type="molecule type" value="Genomic_DNA"/>
</dbReference>
<dbReference type="EMBL" id="BK006948">
    <property type="protein sequence ID" value="DAA11149.1"/>
    <property type="molecule type" value="Genomic_DNA"/>
</dbReference>
<dbReference type="PIR" id="S67302">
    <property type="entry name" value="S67302"/>
</dbReference>
<dbReference type="RefSeq" id="NP_015035.1">
    <property type="nucleotide sequence ID" value="NM_001183810.1"/>
</dbReference>
<dbReference type="SMR" id="Q08913"/>
<dbReference type="BioGRID" id="34771">
    <property type="interactions" value="35"/>
</dbReference>
<dbReference type="DIP" id="DIP-4815N"/>
<dbReference type="FunCoup" id="Q08913">
    <property type="interactions" value="175"/>
</dbReference>
<dbReference type="IntAct" id="Q08913">
    <property type="interactions" value="2"/>
</dbReference>
<dbReference type="STRING" id="4932.YOR390W"/>
<dbReference type="TCDB" id="1.A.43.2.4">
    <property type="family name" value="the camphor resistance or fluoride exporter (fluc) family"/>
</dbReference>
<dbReference type="GlyCosmos" id="Q08913">
    <property type="glycosylation" value="3 sites, No reported glycans"/>
</dbReference>
<dbReference type="GlyGen" id="Q08913">
    <property type="glycosylation" value="3 sites"/>
</dbReference>
<dbReference type="PaxDb" id="4932-YOR390W"/>
<dbReference type="PeptideAtlas" id="Q08913"/>
<dbReference type="EnsemblFungi" id="YOR390W_mRNA">
    <property type="protein sequence ID" value="YOR390W"/>
    <property type="gene ID" value="YOR390W"/>
</dbReference>
<dbReference type="GeneID" id="854572"/>
<dbReference type="KEGG" id="sce:YOR390W"/>
<dbReference type="AGR" id="SGD:S000005917"/>
<dbReference type="SGD" id="S000005917">
    <property type="gene designation" value="FEX1"/>
</dbReference>
<dbReference type="VEuPathDB" id="FungiDB:YOR390W"/>
<dbReference type="eggNOG" id="ENOG502QT5F">
    <property type="taxonomic scope" value="Eukaryota"/>
</dbReference>
<dbReference type="GeneTree" id="ENSGT00940000176800"/>
<dbReference type="HOGENOM" id="CLU_030507_1_2_1"/>
<dbReference type="InParanoid" id="Q08913"/>
<dbReference type="OMA" id="CYDLQHV"/>
<dbReference type="OrthoDB" id="409792at2759"/>
<dbReference type="BioCyc" id="YEAST:G3O-33851-MONOMER"/>
<dbReference type="PRO" id="PR:Q08913"/>
<dbReference type="Proteomes" id="UP000002311">
    <property type="component" value="Chromosome XV"/>
</dbReference>
<dbReference type="RNAct" id="Q08913">
    <property type="molecule type" value="protein"/>
</dbReference>
<dbReference type="GO" id="GO:0071944">
    <property type="term" value="C:cell periphery"/>
    <property type="evidence" value="ECO:0007005"/>
    <property type="project" value="SGD"/>
</dbReference>
<dbReference type="GO" id="GO:0005886">
    <property type="term" value="C:plasma membrane"/>
    <property type="evidence" value="ECO:0000314"/>
    <property type="project" value="SGD"/>
</dbReference>
<dbReference type="GO" id="GO:1903425">
    <property type="term" value="F:fluoride transmembrane transporter activity"/>
    <property type="evidence" value="ECO:0000316"/>
    <property type="project" value="SGD"/>
</dbReference>
<dbReference type="GO" id="GO:1903424">
    <property type="term" value="P:fluoride transmembrane transport"/>
    <property type="evidence" value="ECO:0000315"/>
    <property type="project" value="SGD"/>
</dbReference>
<dbReference type="InterPro" id="IPR003691">
    <property type="entry name" value="FluC"/>
</dbReference>
<dbReference type="PANTHER" id="PTHR28259">
    <property type="entry name" value="FLUORIDE EXPORT PROTEIN 1-RELATED"/>
    <property type="match status" value="1"/>
</dbReference>
<dbReference type="PANTHER" id="PTHR28259:SF1">
    <property type="entry name" value="FLUORIDE EXPORT PROTEIN 1-RELATED"/>
    <property type="match status" value="1"/>
</dbReference>
<dbReference type="Pfam" id="PF02537">
    <property type="entry name" value="CRCB"/>
    <property type="match status" value="1"/>
</dbReference>
<proteinExistence type="evidence at protein level"/>